<sequence length="388" mass="41480">MKHLHRFFSSDASGGIILIIAAVLAMLMANSGFTSGWYHAFLETPVQLRVGALEINKNMLLWINDALMAVFFLLIGLEVKRELMQGSLASLRQAAFPVIAAIGGMIVPALLYLAFNYSDPITREGWAIPAATDIAFALGVLALLGSRVPLALKIFLMALAIIDDLGAIVIIALFYTSDLSMVSLGVAAFAIVLLAVLNLCDVRRTGVYILVGVVLWTAVLKSGVHATLAGVIVGFFIPLKEKHGRSPAKRLEHVLHPWVAYLILPLFAFANAGVSLQGVTLDGLTSILPLGIIAGLLIGKPLGISLFCWLALRLKLAKLPEGTRFQQIMAVGILCGIGFTMSIFIASLAFGSVDPALINWAKLGILIGSLLSAVIGYSWLRTRLSPVV</sequence>
<evidence type="ECO:0000255" key="1">
    <source>
        <dbReference type="HAMAP-Rule" id="MF_01844"/>
    </source>
</evidence>
<feature type="chain" id="PRO_0000334266" description="Na(+)/H(+) antiporter NhaA">
    <location>
        <begin position="1"/>
        <end position="388"/>
    </location>
</feature>
<feature type="transmembrane region" description="Helical" evidence="1">
    <location>
        <begin position="14"/>
        <end position="34"/>
    </location>
</feature>
<feature type="transmembrane region" description="Helical" evidence="1">
    <location>
        <begin position="59"/>
        <end position="79"/>
    </location>
</feature>
<feature type="transmembrane region" description="Helical" evidence="1">
    <location>
        <begin position="95"/>
        <end position="115"/>
    </location>
</feature>
<feature type="transmembrane region" description="Helical" evidence="1">
    <location>
        <begin position="125"/>
        <end position="145"/>
    </location>
</feature>
<feature type="transmembrane region" description="Helical" evidence="1">
    <location>
        <begin position="154"/>
        <end position="174"/>
    </location>
</feature>
<feature type="transmembrane region" description="Helical" evidence="1">
    <location>
        <begin position="179"/>
        <end position="199"/>
    </location>
</feature>
<feature type="transmembrane region" description="Helical" evidence="1">
    <location>
        <begin position="219"/>
        <end position="239"/>
    </location>
</feature>
<feature type="transmembrane region" description="Helical" evidence="1">
    <location>
        <begin position="254"/>
        <end position="274"/>
    </location>
</feature>
<feature type="transmembrane region" description="Helical" evidence="1">
    <location>
        <begin position="287"/>
        <end position="307"/>
    </location>
</feature>
<feature type="transmembrane region" description="Helical" evidence="1">
    <location>
        <begin position="328"/>
        <end position="348"/>
    </location>
</feature>
<feature type="transmembrane region" description="Helical" evidence="1">
    <location>
        <begin position="356"/>
        <end position="376"/>
    </location>
</feature>
<name>NHAA_CITK8</name>
<accession>A8ALU0</accession>
<keyword id="KW-0050">Antiport</keyword>
<keyword id="KW-0997">Cell inner membrane</keyword>
<keyword id="KW-1003">Cell membrane</keyword>
<keyword id="KW-0406">Ion transport</keyword>
<keyword id="KW-0472">Membrane</keyword>
<keyword id="KW-1185">Reference proteome</keyword>
<keyword id="KW-0915">Sodium</keyword>
<keyword id="KW-0739">Sodium transport</keyword>
<keyword id="KW-0812">Transmembrane</keyword>
<keyword id="KW-1133">Transmembrane helix</keyword>
<keyword id="KW-0813">Transport</keyword>
<comment type="function">
    <text evidence="1">Na(+)/H(+) antiporter that extrudes sodium in exchange for external protons.</text>
</comment>
<comment type="catalytic activity">
    <reaction evidence="1">
        <text>Na(+)(in) + 2 H(+)(out) = Na(+)(out) + 2 H(+)(in)</text>
        <dbReference type="Rhea" id="RHEA:29251"/>
        <dbReference type="ChEBI" id="CHEBI:15378"/>
        <dbReference type="ChEBI" id="CHEBI:29101"/>
    </reaction>
    <physiologicalReaction direction="left-to-right" evidence="1">
        <dbReference type="Rhea" id="RHEA:29252"/>
    </physiologicalReaction>
</comment>
<comment type="subcellular location">
    <subcellularLocation>
        <location evidence="1">Cell inner membrane</location>
        <topology evidence="1">Multi-pass membrane protein</topology>
    </subcellularLocation>
</comment>
<comment type="similarity">
    <text evidence="1">Belongs to the NhaA Na(+)/H(+) (TC 2.A.33) antiporter family.</text>
</comment>
<protein>
    <recommendedName>
        <fullName evidence="1">Na(+)/H(+) antiporter NhaA</fullName>
    </recommendedName>
    <alternativeName>
        <fullName evidence="1">Sodium/proton antiporter NhaA</fullName>
    </alternativeName>
</protein>
<organism>
    <name type="scientific">Citrobacter koseri (strain ATCC BAA-895 / CDC 4225-83 / SGSC4696)</name>
    <dbReference type="NCBI Taxonomy" id="290338"/>
    <lineage>
        <taxon>Bacteria</taxon>
        <taxon>Pseudomonadati</taxon>
        <taxon>Pseudomonadota</taxon>
        <taxon>Gammaproteobacteria</taxon>
        <taxon>Enterobacterales</taxon>
        <taxon>Enterobacteriaceae</taxon>
        <taxon>Citrobacter</taxon>
    </lineage>
</organism>
<gene>
    <name evidence="1" type="primary">nhaA</name>
    <name type="ordered locus">CKO_03370</name>
</gene>
<proteinExistence type="inferred from homology"/>
<reference key="1">
    <citation type="submission" date="2007-08" db="EMBL/GenBank/DDBJ databases">
        <authorList>
            <consortium name="The Citrobacter koseri Genome Sequencing Project"/>
            <person name="McClelland M."/>
            <person name="Sanderson E.K."/>
            <person name="Porwollik S."/>
            <person name="Spieth J."/>
            <person name="Clifton W.S."/>
            <person name="Latreille P."/>
            <person name="Courtney L."/>
            <person name="Wang C."/>
            <person name="Pepin K."/>
            <person name="Bhonagiri V."/>
            <person name="Nash W."/>
            <person name="Johnson M."/>
            <person name="Thiruvilangam P."/>
            <person name="Wilson R."/>
        </authorList>
    </citation>
    <scope>NUCLEOTIDE SEQUENCE [LARGE SCALE GENOMIC DNA]</scope>
    <source>
        <strain>ATCC BAA-895 / CDC 4225-83 / SGSC4696</strain>
    </source>
</reference>
<dbReference type="EMBL" id="CP000822">
    <property type="protein sequence ID" value="ABV14453.1"/>
    <property type="molecule type" value="Genomic_DNA"/>
</dbReference>
<dbReference type="RefSeq" id="WP_012134155.1">
    <property type="nucleotide sequence ID" value="NC_009792.1"/>
</dbReference>
<dbReference type="SMR" id="A8ALU0"/>
<dbReference type="STRING" id="290338.CKO_03370"/>
<dbReference type="GeneID" id="45137131"/>
<dbReference type="KEGG" id="cko:CKO_03370"/>
<dbReference type="HOGENOM" id="CLU_015803_1_0_6"/>
<dbReference type="OrthoDB" id="9808135at2"/>
<dbReference type="Proteomes" id="UP000008148">
    <property type="component" value="Chromosome"/>
</dbReference>
<dbReference type="GO" id="GO:0005886">
    <property type="term" value="C:plasma membrane"/>
    <property type="evidence" value="ECO:0007669"/>
    <property type="project" value="UniProtKB-SubCell"/>
</dbReference>
<dbReference type="GO" id="GO:0015385">
    <property type="term" value="F:sodium:proton antiporter activity"/>
    <property type="evidence" value="ECO:0007669"/>
    <property type="project" value="TreeGrafter"/>
</dbReference>
<dbReference type="GO" id="GO:0006885">
    <property type="term" value="P:regulation of pH"/>
    <property type="evidence" value="ECO:0007669"/>
    <property type="project" value="InterPro"/>
</dbReference>
<dbReference type="FunFam" id="1.20.1530.10:FF:000001">
    <property type="entry name" value="Na(+)/H(+) antiporter NhaA"/>
    <property type="match status" value="1"/>
</dbReference>
<dbReference type="Gene3D" id="1.20.1530.10">
    <property type="entry name" value="Na+/H+ antiporter like domain"/>
    <property type="match status" value="1"/>
</dbReference>
<dbReference type="HAMAP" id="MF_01844">
    <property type="entry name" value="NhaA"/>
    <property type="match status" value="1"/>
</dbReference>
<dbReference type="InterPro" id="IPR023171">
    <property type="entry name" value="Na/H_antiporter_dom_sf"/>
</dbReference>
<dbReference type="InterPro" id="IPR004670">
    <property type="entry name" value="NhaA"/>
</dbReference>
<dbReference type="NCBIfam" id="TIGR00773">
    <property type="entry name" value="NhaA"/>
    <property type="match status" value="1"/>
</dbReference>
<dbReference type="NCBIfam" id="NF007111">
    <property type="entry name" value="PRK09560.1"/>
    <property type="match status" value="1"/>
</dbReference>
<dbReference type="NCBIfam" id="NF007112">
    <property type="entry name" value="PRK09561.1"/>
    <property type="match status" value="1"/>
</dbReference>
<dbReference type="PANTHER" id="PTHR30341:SF0">
    <property type="entry name" value="NA(+)_H(+) ANTIPORTER NHAA"/>
    <property type="match status" value="1"/>
</dbReference>
<dbReference type="PANTHER" id="PTHR30341">
    <property type="entry name" value="SODIUM ION/PROTON ANTIPORTER NHAA-RELATED"/>
    <property type="match status" value="1"/>
</dbReference>
<dbReference type="Pfam" id="PF06965">
    <property type="entry name" value="Na_H_antiport_1"/>
    <property type="match status" value="1"/>
</dbReference>